<accession>B8F667</accession>
<feature type="chain" id="PRO_1000164992" description="Putative N-acetylmannosamine-6-phosphate 2-epimerase">
    <location>
        <begin position="1"/>
        <end position="231"/>
    </location>
</feature>
<proteinExistence type="inferred from homology"/>
<organism>
    <name type="scientific">Glaesserella parasuis serovar 5 (strain SH0165)</name>
    <name type="common">Haemophilus parasuis</name>
    <dbReference type="NCBI Taxonomy" id="557723"/>
    <lineage>
        <taxon>Bacteria</taxon>
        <taxon>Pseudomonadati</taxon>
        <taxon>Pseudomonadota</taxon>
        <taxon>Gammaproteobacteria</taxon>
        <taxon>Pasteurellales</taxon>
        <taxon>Pasteurellaceae</taxon>
        <taxon>Glaesserella</taxon>
    </lineage>
</organism>
<protein>
    <recommendedName>
        <fullName evidence="1">Putative N-acetylmannosamine-6-phosphate 2-epimerase</fullName>
        <ecNumber evidence="1">5.1.3.9</ecNumber>
    </recommendedName>
    <alternativeName>
        <fullName evidence="1">ManNAc-6-P epimerase</fullName>
    </alternativeName>
</protein>
<evidence type="ECO:0000255" key="1">
    <source>
        <dbReference type="HAMAP-Rule" id="MF_01235"/>
    </source>
</evidence>
<dbReference type="EC" id="5.1.3.9" evidence="1"/>
<dbReference type="EMBL" id="CP001321">
    <property type="protein sequence ID" value="ACL32819.1"/>
    <property type="molecule type" value="Genomic_DNA"/>
</dbReference>
<dbReference type="RefSeq" id="WP_010786157.1">
    <property type="nucleotide sequence ID" value="NC_011852.1"/>
</dbReference>
<dbReference type="SMR" id="B8F667"/>
<dbReference type="STRING" id="557723.HAPS_1216"/>
<dbReference type="KEGG" id="hap:HAPS_1216"/>
<dbReference type="PATRIC" id="fig|557723.8.peg.1207"/>
<dbReference type="HOGENOM" id="CLU_086300_0_0_6"/>
<dbReference type="UniPathway" id="UPA00629">
    <property type="reaction ID" value="UER00682"/>
</dbReference>
<dbReference type="Proteomes" id="UP000006743">
    <property type="component" value="Chromosome"/>
</dbReference>
<dbReference type="GO" id="GO:0005829">
    <property type="term" value="C:cytosol"/>
    <property type="evidence" value="ECO:0007669"/>
    <property type="project" value="TreeGrafter"/>
</dbReference>
<dbReference type="GO" id="GO:0047465">
    <property type="term" value="F:N-acylglucosamine-6-phosphate 2-epimerase activity"/>
    <property type="evidence" value="ECO:0007669"/>
    <property type="project" value="UniProtKB-EC"/>
</dbReference>
<dbReference type="GO" id="GO:0005975">
    <property type="term" value="P:carbohydrate metabolic process"/>
    <property type="evidence" value="ECO:0007669"/>
    <property type="project" value="UniProtKB-UniRule"/>
</dbReference>
<dbReference type="GO" id="GO:0006053">
    <property type="term" value="P:N-acetylmannosamine catabolic process"/>
    <property type="evidence" value="ECO:0007669"/>
    <property type="project" value="TreeGrafter"/>
</dbReference>
<dbReference type="GO" id="GO:0019262">
    <property type="term" value="P:N-acetylneuraminate catabolic process"/>
    <property type="evidence" value="ECO:0007669"/>
    <property type="project" value="UniProtKB-UniRule"/>
</dbReference>
<dbReference type="CDD" id="cd04729">
    <property type="entry name" value="NanE"/>
    <property type="match status" value="1"/>
</dbReference>
<dbReference type="FunFam" id="3.20.20.70:FF:000035">
    <property type="entry name" value="Putative N-acetylmannosamine-6-phosphate 2-epimerase"/>
    <property type="match status" value="1"/>
</dbReference>
<dbReference type="Gene3D" id="3.20.20.70">
    <property type="entry name" value="Aldolase class I"/>
    <property type="match status" value="1"/>
</dbReference>
<dbReference type="HAMAP" id="MF_01235">
    <property type="entry name" value="ManNAc6P_epimer"/>
    <property type="match status" value="1"/>
</dbReference>
<dbReference type="InterPro" id="IPR013785">
    <property type="entry name" value="Aldolase_TIM"/>
</dbReference>
<dbReference type="InterPro" id="IPR007260">
    <property type="entry name" value="NanE"/>
</dbReference>
<dbReference type="InterPro" id="IPR011060">
    <property type="entry name" value="RibuloseP-bd_barrel"/>
</dbReference>
<dbReference type="NCBIfam" id="NF002231">
    <property type="entry name" value="PRK01130.1"/>
    <property type="match status" value="1"/>
</dbReference>
<dbReference type="PANTHER" id="PTHR36204">
    <property type="entry name" value="N-ACETYLMANNOSAMINE-6-PHOSPHATE 2-EPIMERASE-RELATED"/>
    <property type="match status" value="1"/>
</dbReference>
<dbReference type="PANTHER" id="PTHR36204:SF1">
    <property type="entry name" value="N-ACETYLMANNOSAMINE-6-PHOSPHATE 2-EPIMERASE-RELATED"/>
    <property type="match status" value="1"/>
</dbReference>
<dbReference type="Pfam" id="PF04131">
    <property type="entry name" value="NanE"/>
    <property type="match status" value="1"/>
</dbReference>
<dbReference type="SUPFAM" id="SSF51366">
    <property type="entry name" value="Ribulose-phoshate binding barrel"/>
    <property type="match status" value="1"/>
</dbReference>
<reference key="1">
    <citation type="journal article" date="2009" name="J. Bacteriol.">
        <title>Complete genome sequence of Haemophilus parasuis SH0165.</title>
        <authorList>
            <person name="Yue M."/>
            <person name="Yang F."/>
            <person name="Yang J."/>
            <person name="Bei W."/>
            <person name="Cai X."/>
            <person name="Chen L."/>
            <person name="Dong J."/>
            <person name="Zhou R."/>
            <person name="Jin M."/>
            <person name="Jin Q."/>
            <person name="Chen H."/>
        </authorList>
    </citation>
    <scope>NUCLEOTIDE SEQUENCE [LARGE SCALE GENOMIC DNA]</scope>
    <source>
        <strain>SH0165</strain>
    </source>
</reference>
<gene>
    <name evidence="1" type="primary">nanE</name>
    <name type="ordered locus">HAPS_1216</name>
</gene>
<comment type="function">
    <text evidence="1">Converts N-acetylmannosamine-6-phosphate (ManNAc-6-P) to N-acetylglucosamine-6-phosphate (GlcNAc-6-P).</text>
</comment>
<comment type="catalytic activity">
    <reaction evidence="1">
        <text>an N-acyl-D-glucosamine 6-phosphate = an N-acyl-D-mannosamine 6-phosphate</text>
        <dbReference type="Rhea" id="RHEA:23932"/>
        <dbReference type="ChEBI" id="CHEBI:57599"/>
        <dbReference type="ChEBI" id="CHEBI:57666"/>
        <dbReference type="EC" id="5.1.3.9"/>
    </reaction>
</comment>
<comment type="pathway">
    <text evidence="1">Amino-sugar metabolism; N-acetylneuraminate degradation; D-fructose 6-phosphate from N-acetylneuraminate: step 3/5.</text>
</comment>
<comment type="similarity">
    <text evidence="1">Belongs to the NanE family.</text>
</comment>
<keyword id="KW-0119">Carbohydrate metabolism</keyword>
<keyword id="KW-0413">Isomerase</keyword>
<keyword id="KW-1185">Reference proteome</keyword>
<name>NANE_GLAP5</name>
<sequence length="231" mass="24697">MSRLTKQQILEQLKNGLIASCQPVDDGPMDSPEIVAAMAKASVIGGAAGLRIEGIDNLKAVRKVVDVPIVGIVKRDLPDSPVRITPFLQDIDDLYHAGADIIAFDGTDRVRPTTIEACARRIQELGAMSMADCSNYKEGMYCQELGVDLIGSTMSGYTGGETPDEPDVQLVRDLVASGCRVMAEGRYNTPELAAVAIENGAYAVTVGSALTRLEHIVSWFVTAIDDRKTGA</sequence>